<accession>A2Q5W1</accession>
<accession>A0A0C3WB51</accession>
<accession>A9Y0K7</accession>
<accession>G7KZH5</accession>
<dbReference type="EMBL" id="DQ984942">
    <property type="protein sequence ID" value="ABK28850.1"/>
    <property type="molecule type" value="Genomic_DNA"/>
</dbReference>
<dbReference type="EMBL" id="EF396330">
    <property type="protein sequence ID" value="ABQ85894.1"/>
    <property type="molecule type" value="Genomic_DNA"/>
</dbReference>
<dbReference type="EMBL" id="EU038802">
    <property type="protein sequence ID" value="ABW06102.2"/>
    <property type="molecule type" value="mRNA"/>
</dbReference>
<dbReference type="EMBL" id="AC170580">
    <property type="protein sequence ID" value="ABN08981.1"/>
    <property type="molecule type" value="Genomic_DNA"/>
</dbReference>
<dbReference type="EMBL" id="CM001223">
    <property type="protein sequence ID" value="AES80852.2"/>
    <property type="status" value="ALT_INIT"/>
    <property type="molecule type" value="Genomic_DNA"/>
</dbReference>
<dbReference type="RefSeq" id="XP_003624634.2">
    <property type="nucleotide sequence ID" value="XM_003624586.2"/>
</dbReference>
<dbReference type="SMR" id="A2Q5W1"/>
<dbReference type="STRING" id="3880.A2Q5W1"/>
<dbReference type="PaxDb" id="3880-AES80852"/>
<dbReference type="EnsemblPlants" id="rna42085">
    <property type="protein sequence ID" value="RHN47475.1"/>
    <property type="gene ID" value="gene42085"/>
</dbReference>
<dbReference type="GeneID" id="11437275"/>
<dbReference type="Gramene" id="rna42085">
    <property type="protein sequence ID" value="RHN47475.1"/>
    <property type="gene ID" value="gene42085"/>
</dbReference>
<dbReference type="KEGG" id="mtr:11437275"/>
<dbReference type="eggNOG" id="ENOG502QSNC">
    <property type="taxonomic scope" value="Eukaryota"/>
</dbReference>
<dbReference type="HOGENOM" id="CLU_056266_0_0_1"/>
<dbReference type="OrthoDB" id="773121at2759"/>
<dbReference type="Proteomes" id="UP000002051">
    <property type="component" value="Chomosome 7"/>
</dbReference>
<dbReference type="ExpressionAtlas" id="A2Q5W1">
    <property type="expression patterns" value="differential"/>
</dbReference>
<dbReference type="GO" id="GO:0005634">
    <property type="term" value="C:nucleus"/>
    <property type="evidence" value="ECO:0000314"/>
    <property type="project" value="UniProtKB"/>
</dbReference>
<dbReference type="GO" id="GO:0003700">
    <property type="term" value="F:DNA-binding transcription factor activity"/>
    <property type="evidence" value="ECO:0007669"/>
    <property type="project" value="InterPro"/>
</dbReference>
<dbReference type="GO" id="GO:0043565">
    <property type="term" value="F:sequence-specific DNA binding"/>
    <property type="evidence" value="ECO:0000314"/>
    <property type="project" value="UniProtKB"/>
</dbReference>
<dbReference type="GO" id="GO:0009877">
    <property type="term" value="P:nodulation"/>
    <property type="evidence" value="ECO:0000315"/>
    <property type="project" value="UniProtKB"/>
</dbReference>
<dbReference type="GO" id="GO:0045893">
    <property type="term" value="P:positive regulation of DNA-templated transcription"/>
    <property type="evidence" value="ECO:0000314"/>
    <property type="project" value="UniProtKB"/>
</dbReference>
<dbReference type="CDD" id="cd00018">
    <property type="entry name" value="AP2"/>
    <property type="match status" value="1"/>
</dbReference>
<dbReference type="FunFam" id="3.30.730.10:FF:000005">
    <property type="entry name" value="ethylene-responsive transcription factor RAP2-11"/>
    <property type="match status" value="1"/>
</dbReference>
<dbReference type="Gene3D" id="3.30.730.10">
    <property type="entry name" value="AP2/ERF domain"/>
    <property type="match status" value="1"/>
</dbReference>
<dbReference type="InterPro" id="IPR001471">
    <property type="entry name" value="AP2/ERF_dom"/>
</dbReference>
<dbReference type="InterPro" id="IPR036955">
    <property type="entry name" value="AP2/ERF_dom_sf"/>
</dbReference>
<dbReference type="InterPro" id="IPR050913">
    <property type="entry name" value="AP2/ERF_ERF_subfamily"/>
</dbReference>
<dbReference type="InterPro" id="IPR016177">
    <property type="entry name" value="DNA-bd_dom_sf"/>
</dbReference>
<dbReference type="PANTHER" id="PTHR31194:SF1">
    <property type="entry name" value="ETHYLENE-RESPONSIVE TRANSCRIPTION FACTOR ERN2"/>
    <property type="match status" value="1"/>
</dbReference>
<dbReference type="PANTHER" id="PTHR31194">
    <property type="entry name" value="SHN SHINE , DNA BINDING / TRANSCRIPTION FACTOR"/>
    <property type="match status" value="1"/>
</dbReference>
<dbReference type="Pfam" id="PF00847">
    <property type="entry name" value="AP2"/>
    <property type="match status" value="1"/>
</dbReference>
<dbReference type="PRINTS" id="PR00367">
    <property type="entry name" value="ETHRSPELEMNT"/>
</dbReference>
<dbReference type="SMART" id="SM00380">
    <property type="entry name" value="AP2"/>
    <property type="match status" value="1"/>
</dbReference>
<dbReference type="SUPFAM" id="SSF54171">
    <property type="entry name" value="DNA-binding domain"/>
    <property type="match status" value="1"/>
</dbReference>
<dbReference type="PROSITE" id="PS51032">
    <property type="entry name" value="AP2_ERF"/>
    <property type="match status" value="1"/>
</dbReference>
<proteinExistence type="evidence at transcript level"/>
<evidence type="ECO:0000255" key="1">
    <source>
        <dbReference type="PROSITE-ProRule" id="PRU00366"/>
    </source>
</evidence>
<evidence type="ECO:0000256" key="2">
    <source>
        <dbReference type="SAM" id="MobiDB-lite"/>
    </source>
</evidence>
<evidence type="ECO:0000269" key="3">
    <source>
    </source>
</evidence>
<evidence type="ECO:0000269" key="4">
    <source>
    </source>
</evidence>
<evidence type="ECO:0000269" key="5">
    <source>
    </source>
</evidence>
<evidence type="ECO:0000269" key="6">
    <source>
    </source>
</evidence>
<evidence type="ECO:0000303" key="7">
    <source>
    </source>
</evidence>
<evidence type="ECO:0000303" key="8">
    <source>
    </source>
</evidence>
<evidence type="ECO:0000305" key="9"/>
<evidence type="ECO:0000312" key="10">
    <source>
        <dbReference type="EMBL" id="ABN08981.1"/>
    </source>
</evidence>
<evidence type="ECO:0000312" key="11">
    <source>
        <dbReference type="EMBL" id="AES80852.2"/>
    </source>
</evidence>
<feature type="chain" id="PRO_0000444707" description="Ethylene-responsive transcription factor ERN1">
    <location>
        <begin position="1"/>
        <end position="268"/>
    </location>
</feature>
<feature type="DNA-binding region" description="AP2/ERF" evidence="1">
    <location>
        <begin position="38"/>
        <end position="95"/>
    </location>
</feature>
<feature type="region of interest" description="Disordered" evidence="2">
    <location>
        <begin position="1"/>
        <end position="36"/>
    </location>
</feature>
<feature type="region of interest" description="Disordered" evidence="2">
    <location>
        <begin position="114"/>
        <end position="154"/>
    </location>
</feature>
<feature type="compositionally biased region" description="Polar residues" evidence="2">
    <location>
        <begin position="1"/>
        <end position="21"/>
    </location>
</feature>
<feature type="compositionally biased region" description="Low complexity" evidence="2">
    <location>
        <begin position="131"/>
        <end position="146"/>
    </location>
</feature>
<comment type="function">
    <text evidence="3 4 5 6">Transcription factor involved in symbiotic nodule signaling in response to rhizobial Nod factors (NFs) (PubMed:17449807, PubMed:17827349). Binds to the GCC-box (NF-responsive box) of ENOD11 promoter. Acts as a transcriptional activator of NF-responsive box-containing target gene promoters in root hairs (PubMed:17827349). Functions as a transcriptional regulator required for root infection by symbiotic rhizobia, infection thread (IT) formation and maintenance, and nodule development. Necessary for NF-induced gene expression and spontaneous nodulation activated by CCAMK. Functions downstream of CCAMK to activate nodulation gene expression (PubMed:17449807). Involved in early stages of root nodule development. Functions redundantly with ERN2. Is essential with ERN2 for the initiation of root hair infection, and nodule organogenesis and development. Required for accurate expression of the NF signaling genes ENOD11 and ENOD12 (PubMed:23077241, PubMed:27208242).</text>
</comment>
<comment type="subcellular location">
    <subcellularLocation>
        <location evidence="1 4 5">Nucleus</location>
    </subcellularLocation>
</comment>
<comment type="tissue specificity">
    <text evidence="4 5">Expressed in roots, root hairs and leaves (PubMed:17827349). Expressed in root epidermis and root hairs (PubMed:23077241).</text>
</comment>
<comment type="induction">
    <text evidence="3 4">Induced in roots from 1 to 21 day after inoculation with Sinorhizobium meliloti (PubMed:17449807). Induced by Nod factors in root hairs (PubMed:17827349).</text>
</comment>
<comment type="disruption phenotype">
    <text evidence="3">No visible phenotype under normal growth conditions, but roots of mutant plants, are impaired in the interaction with rhizobia, and in infection thread (IT) initiation and maintenance.</text>
</comment>
<comment type="similarity">
    <text evidence="9">Belongs to the AP2/ERF transcription factor family. ERF subfamily.</text>
</comment>
<comment type="sequence caution" evidence="9">
    <conflict type="erroneous initiation">
        <sequence resource="EMBL-CDS" id="AES80852"/>
    </conflict>
    <text>Truncated N-terminus.</text>
</comment>
<keyword id="KW-0238">DNA-binding</keyword>
<keyword id="KW-0536">Nodulation</keyword>
<keyword id="KW-0539">Nucleus</keyword>
<keyword id="KW-1185">Reference proteome</keyword>
<keyword id="KW-0804">Transcription</keyword>
<keyword id="KW-0805">Transcription regulation</keyword>
<reference key="1">
    <citation type="journal article" date="2007" name="Plant Cell">
        <title>An ERF transcription factor in Medicago truncatula that is essential for Nod factor signal transduction.</title>
        <authorList>
            <person name="Middleton P.H."/>
            <person name="Jakab J."/>
            <person name="Penmetsa R.V."/>
            <person name="Starker C.G."/>
            <person name="Doll J."/>
            <person name="Kalo P."/>
            <person name="Prabhu R."/>
            <person name="Marsh J.F."/>
            <person name="Mitra R.M."/>
            <person name="Kereszt A."/>
            <person name="Dudas B."/>
            <person name="Vandenbosch K."/>
            <person name="Long S.R."/>
            <person name="Cook D.R."/>
            <person name="Kiss G.B."/>
            <person name="Oldroyd G.E."/>
        </authorList>
    </citation>
    <scope>NUCLEOTIDE SEQUENCE [GENOMIC DNA]</scope>
    <scope>FUNCTION</scope>
    <scope>INDUCTION</scope>
    <scope>DISRUPTION PHENOTYPE</scope>
    <source>
        <strain>cv. Jemalong A17</strain>
    </source>
</reference>
<reference key="2">
    <citation type="journal article" date="2007" name="Plant Cell">
        <title>AP2-ERF transcription factors mediate Nod factor dependent Mt ENOD11 activation in root hairs via a novel cis-regulatory motif.</title>
        <authorList>
            <person name="Andriankaja A."/>
            <person name="Boisson-Dernier A."/>
            <person name="Frances L."/>
            <person name="Sauviac L."/>
            <person name="Jauneau A."/>
            <person name="Barker D.G."/>
            <person name="de Carvalho-Niebel F."/>
        </authorList>
    </citation>
    <scope>NUCLEOTIDE SEQUENCE [MRNA]</scope>
    <scope>FUNCTION</scope>
    <scope>SUBCELLULAR LOCATION</scope>
    <scope>TISSUE SPECIFICITY</scope>
    <scope>INDUCTION BY NOD FACTORS</scope>
</reference>
<reference key="3">
    <citation type="submission" date="2005-11" db="EMBL/GenBank/DDBJ databases">
        <title>Medicago truncatula chromosome 7 clone mte1-32m6 complete sequence.</title>
        <authorList>
            <person name="Town C.D."/>
        </authorList>
    </citation>
    <scope>NUCLEOTIDE SEQUENCE [GENOMIC DNA]</scope>
</reference>
<reference key="4">
    <citation type="journal article" date="2011" name="Nature">
        <title>The Medicago genome provides insight into the evolution of rhizobial symbioses.</title>
        <authorList>
            <person name="Young N.D."/>
            <person name="Debelle F."/>
            <person name="Oldroyd G.E.D."/>
            <person name="Geurts R."/>
            <person name="Cannon S.B."/>
            <person name="Udvardi M.K."/>
            <person name="Benedito V.A."/>
            <person name="Mayer K.F.X."/>
            <person name="Gouzy J."/>
            <person name="Schoof H."/>
            <person name="Van de Peer Y."/>
            <person name="Proost S."/>
            <person name="Cook D.R."/>
            <person name="Meyers B.C."/>
            <person name="Spannagl M."/>
            <person name="Cheung F."/>
            <person name="De Mita S."/>
            <person name="Krishnakumar V."/>
            <person name="Gundlach H."/>
            <person name="Zhou S."/>
            <person name="Mudge J."/>
            <person name="Bharti A.K."/>
            <person name="Murray J.D."/>
            <person name="Naoumkina M.A."/>
            <person name="Rosen B."/>
            <person name="Silverstein K.A.T."/>
            <person name="Tang H."/>
            <person name="Rombauts S."/>
            <person name="Zhao P.X."/>
            <person name="Zhou P."/>
            <person name="Barbe V."/>
            <person name="Bardou P."/>
            <person name="Bechner M."/>
            <person name="Bellec A."/>
            <person name="Berger A."/>
            <person name="Berges H."/>
            <person name="Bidwell S."/>
            <person name="Bisseling T."/>
            <person name="Choisne N."/>
            <person name="Couloux A."/>
            <person name="Denny R."/>
            <person name="Deshpande S."/>
            <person name="Dai X."/>
            <person name="Doyle J.J."/>
            <person name="Dudez A.-M."/>
            <person name="Farmer A.D."/>
            <person name="Fouteau S."/>
            <person name="Franken C."/>
            <person name="Gibelin C."/>
            <person name="Gish J."/>
            <person name="Goldstein S."/>
            <person name="Gonzalez A.J."/>
            <person name="Green P.J."/>
            <person name="Hallab A."/>
            <person name="Hartog M."/>
            <person name="Hua A."/>
            <person name="Humphray S.J."/>
            <person name="Jeong D.-H."/>
            <person name="Jing Y."/>
            <person name="Jocker A."/>
            <person name="Kenton S.M."/>
            <person name="Kim D.-J."/>
            <person name="Klee K."/>
            <person name="Lai H."/>
            <person name="Lang C."/>
            <person name="Lin S."/>
            <person name="Macmil S.L."/>
            <person name="Magdelenat G."/>
            <person name="Matthews L."/>
            <person name="McCorrison J."/>
            <person name="Monaghan E.L."/>
            <person name="Mun J.-H."/>
            <person name="Najar F.Z."/>
            <person name="Nicholson C."/>
            <person name="Noirot C."/>
            <person name="O'Bleness M."/>
            <person name="Paule C.R."/>
            <person name="Poulain J."/>
            <person name="Prion F."/>
            <person name="Qin B."/>
            <person name="Qu C."/>
            <person name="Retzel E.F."/>
            <person name="Riddle C."/>
            <person name="Sallet E."/>
            <person name="Samain S."/>
            <person name="Samson N."/>
            <person name="Sanders I."/>
            <person name="Saurat O."/>
            <person name="Scarpelli C."/>
            <person name="Schiex T."/>
            <person name="Segurens B."/>
            <person name="Severin A.J."/>
            <person name="Sherrier D.J."/>
            <person name="Shi R."/>
            <person name="Sims S."/>
            <person name="Singer S.R."/>
            <person name="Sinharoy S."/>
            <person name="Sterck L."/>
            <person name="Viollet A."/>
            <person name="Wang B.-B."/>
            <person name="Wang K."/>
            <person name="Wang M."/>
            <person name="Wang X."/>
            <person name="Warfsmann J."/>
            <person name="Weissenbach J."/>
            <person name="White D.D."/>
            <person name="White J.D."/>
            <person name="Wiley G.B."/>
            <person name="Wincker P."/>
            <person name="Xing Y."/>
            <person name="Yang L."/>
            <person name="Yao Z."/>
            <person name="Ying F."/>
            <person name="Zhai J."/>
            <person name="Zhou L."/>
            <person name="Zuber A."/>
            <person name="Denarie J."/>
            <person name="Dixon R.A."/>
            <person name="May G.D."/>
            <person name="Schwartz D.C."/>
            <person name="Rogers J."/>
            <person name="Quetier F."/>
            <person name="Town C.D."/>
            <person name="Roe B.A."/>
        </authorList>
    </citation>
    <scope>NUCLEOTIDE SEQUENCE [LARGE SCALE GENOMIC DNA]</scope>
    <source>
        <strain>cv. Jemalong A17</strain>
    </source>
</reference>
<reference key="5">
    <citation type="journal article" date="2014" name="BMC Genomics">
        <title>An improved genome release (version Mt4.0) for the model legume Medicago truncatula.</title>
        <authorList>
            <person name="Tang H."/>
            <person name="Krishnakumar V."/>
            <person name="Bidwell S."/>
            <person name="Rosen B."/>
            <person name="Chan A."/>
            <person name="Zhou S."/>
            <person name="Gentzbittel L."/>
            <person name="Childs K.L."/>
            <person name="Yandell M."/>
            <person name="Gundlach H."/>
            <person name="Mayer K.F."/>
            <person name="Schwartz D.C."/>
            <person name="Town C.D."/>
        </authorList>
    </citation>
    <scope>GENOME REANNOTATION</scope>
    <source>
        <strain>cv. Jemalong A17</strain>
    </source>
</reference>
<reference key="6">
    <citation type="journal article" date="2012" name="Plant Physiol.">
        <title>Medicago truncatula ERN transcription factors: regulatory interplay with NSP1/NSP2 GRAS factors and expression dynamics throughout rhizobial infection.</title>
        <authorList>
            <person name="Cerri M.R."/>
            <person name="Frances L."/>
            <person name="Laloum T."/>
            <person name="Auriac M.C."/>
            <person name="Niebel A."/>
            <person name="Oldroyd G.E."/>
            <person name="Barker D.G."/>
            <person name="Fournier J."/>
            <person name="de Carvalho-Niebel F."/>
        </authorList>
    </citation>
    <scope>FUNCTION</scope>
    <scope>SUBCELLULAR LOCATION</scope>
    <scope>TISSUE SPECIFICITY</scope>
</reference>
<reference key="7">
    <citation type="journal article" date="2016" name="Plant Physiol.">
        <title>The symbiosis-related ERN transcription factors act in concert to coordinate rhizobial host root infection.</title>
        <authorList>
            <person name="Cerri M.R."/>
            <person name="Frances L."/>
            <person name="Kelner A."/>
            <person name="Fournier J."/>
            <person name="Middleton P.H."/>
            <person name="Auriac M.C."/>
            <person name="Mysore K.S."/>
            <person name="Wen J."/>
            <person name="Erard M."/>
            <person name="Barker D.G."/>
            <person name="Oldroyd G.E."/>
            <person name="de Carvalho-Niebel F."/>
        </authorList>
    </citation>
    <scope>FUNCTION</scope>
</reference>
<organism>
    <name type="scientific">Medicago truncatula</name>
    <name type="common">Barrel medic</name>
    <name type="synonym">Medicago tribuloides</name>
    <dbReference type="NCBI Taxonomy" id="3880"/>
    <lineage>
        <taxon>Eukaryota</taxon>
        <taxon>Viridiplantae</taxon>
        <taxon>Streptophyta</taxon>
        <taxon>Embryophyta</taxon>
        <taxon>Tracheophyta</taxon>
        <taxon>Spermatophyta</taxon>
        <taxon>Magnoliopsida</taxon>
        <taxon>eudicotyledons</taxon>
        <taxon>Gunneridae</taxon>
        <taxon>Pentapetalae</taxon>
        <taxon>rosids</taxon>
        <taxon>fabids</taxon>
        <taxon>Fabales</taxon>
        <taxon>Fabaceae</taxon>
        <taxon>Papilionoideae</taxon>
        <taxon>50 kb inversion clade</taxon>
        <taxon>NPAAA clade</taxon>
        <taxon>Hologalegina</taxon>
        <taxon>IRL clade</taxon>
        <taxon>Trifolieae</taxon>
        <taxon>Medicago</taxon>
    </lineage>
</organism>
<protein>
    <recommendedName>
        <fullName evidence="9">Ethylene-responsive transcription factor ERN1</fullName>
        <shortName evidence="9">ERF transcription factor ERN1</shortName>
    </recommendedName>
    <alternativeName>
        <fullName evidence="8">NF box-binding protein 1</fullName>
    </alternativeName>
    <alternativeName>
        <fullName evidence="8">Protein ERF REQUIRED FOR NODULATION 1</fullName>
    </alternativeName>
</protein>
<name>ERN1_MEDTR</name>
<sequence length="268" mass="29958">MEIQFQQPNMQNQKAGISVTNKGGKFKGRNRNSNNTNKFVGVRQRPSGRWVAEIKDTTQKIRMWLGTFETAEEAARAYDEAACLLRGSNTRTNFITHVSLDSPLASRIRNLLNNRKGDKKQEDGAVASAPSNSKTTISNTSTITSNDDNKESTLSTCATRNTELFEDAYKPDLSNCKEVFESGSQSNISCGFGPFFDHFSFTQLLDMAKNDDITDASSLELSEFERMKVERQISASLYAINGVHEYMETVQESNEALWDLPPLCSLFC</sequence>
<gene>
    <name evidence="8" type="primary">ERN1</name>
    <name evidence="7" type="synonym">ERN</name>
    <name evidence="8" type="synonym">NFbB1</name>
    <name evidence="11" type="ordered locus">MTR_7g085810</name>
    <name evidence="10" type="ORF">MtrDRAFT_AC170580g4v1</name>
</gene>